<protein>
    <recommendedName>
        <fullName evidence="1">Transcriptional repressor NrdR</fullName>
    </recommendedName>
</protein>
<sequence>MHCPFCRHPDSRVIDSRETDEGQAIRRRRSCPECGRRFTTVETAVLAVVKRSGVTEPFSREKVISGVRRACQGRQVDDDALNLLAQQVEDSVRAAGSPEIPSHDVGLAILGPLRELDEVAYLRFASVYRSFSSADDFAREIEALRAHRNLSAHS</sequence>
<organism>
    <name type="scientific">Mycobacterium tuberculosis (strain ATCC 25618 / H37Rv)</name>
    <dbReference type="NCBI Taxonomy" id="83332"/>
    <lineage>
        <taxon>Bacteria</taxon>
        <taxon>Bacillati</taxon>
        <taxon>Actinomycetota</taxon>
        <taxon>Actinomycetes</taxon>
        <taxon>Mycobacteriales</taxon>
        <taxon>Mycobacteriaceae</taxon>
        <taxon>Mycobacterium</taxon>
        <taxon>Mycobacterium tuberculosis complex</taxon>
    </lineage>
</organism>
<keyword id="KW-0067">ATP-binding</keyword>
<keyword id="KW-0238">DNA-binding</keyword>
<keyword id="KW-0479">Metal-binding</keyword>
<keyword id="KW-0547">Nucleotide-binding</keyword>
<keyword id="KW-1185">Reference proteome</keyword>
<keyword id="KW-0678">Repressor</keyword>
<keyword id="KW-0804">Transcription</keyword>
<keyword id="KW-0805">Transcription regulation</keyword>
<keyword id="KW-0862">Zinc</keyword>
<keyword id="KW-0863">Zinc-finger</keyword>
<reference key="1">
    <citation type="journal article" date="1998" name="Nature">
        <title>Deciphering the biology of Mycobacterium tuberculosis from the complete genome sequence.</title>
        <authorList>
            <person name="Cole S.T."/>
            <person name="Brosch R."/>
            <person name="Parkhill J."/>
            <person name="Garnier T."/>
            <person name="Churcher C.M."/>
            <person name="Harris D.E."/>
            <person name="Gordon S.V."/>
            <person name="Eiglmeier K."/>
            <person name="Gas S."/>
            <person name="Barry C.E. III"/>
            <person name="Tekaia F."/>
            <person name="Badcock K."/>
            <person name="Basham D."/>
            <person name="Brown D."/>
            <person name="Chillingworth T."/>
            <person name="Connor R."/>
            <person name="Davies R.M."/>
            <person name="Devlin K."/>
            <person name="Feltwell T."/>
            <person name="Gentles S."/>
            <person name="Hamlin N."/>
            <person name="Holroyd S."/>
            <person name="Hornsby T."/>
            <person name="Jagels K."/>
            <person name="Krogh A."/>
            <person name="McLean J."/>
            <person name="Moule S."/>
            <person name="Murphy L.D."/>
            <person name="Oliver S."/>
            <person name="Osborne J."/>
            <person name="Quail M.A."/>
            <person name="Rajandream M.A."/>
            <person name="Rogers J."/>
            <person name="Rutter S."/>
            <person name="Seeger K."/>
            <person name="Skelton S."/>
            <person name="Squares S."/>
            <person name="Squares R."/>
            <person name="Sulston J.E."/>
            <person name="Taylor K."/>
            <person name="Whitehead S."/>
            <person name="Barrell B.G."/>
        </authorList>
    </citation>
    <scope>NUCLEOTIDE SEQUENCE [LARGE SCALE GENOMIC DNA]</scope>
    <source>
        <strain>ATCC 25618 / H37Rv</strain>
    </source>
</reference>
<reference key="2">
    <citation type="journal article" date="2011" name="Mol. Cell. Proteomics">
        <title>Proteogenomic analysis of Mycobacterium tuberculosis by high resolution mass spectrometry.</title>
        <authorList>
            <person name="Kelkar D.S."/>
            <person name="Kumar D."/>
            <person name="Kumar P."/>
            <person name="Balakrishnan L."/>
            <person name="Muthusamy B."/>
            <person name="Yadav A.K."/>
            <person name="Shrivastava P."/>
            <person name="Marimuthu A."/>
            <person name="Anand S."/>
            <person name="Sundaram H."/>
            <person name="Kingsbury R."/>
            <person name="Harsha H.C."/>
            <person name="Nair B."/>
            <person name="Prasad T.S."/>
            <person name="Chauhan D.S."/>
            <person name="Katoch K."/>
            <person name="Katoch V.M."/>
            <person name="Kumar P."/>
            <person name="Chaerkady R."/>
            <person name="Ramachandran S."/>
            <person name="Dash D."/>
            <person name="Pandey A."/>
        </authorList>
    </citation>
    <scope>IDENTIFICATION BY MASS SPECTROMETRY [LARGE SCALE ANALYSIS]</scope>
    <source>
        <strain>ATCC 25618 / H37Rv</strain>
    </source>
</reference>
<reference key="3">
    <citation type="journal article" date="2020" name="Mol. Microbiol.">
        <title>Depletion of the DarG antitoxin in Mycobacterium tuberculosis triggers the DNA-damage response and leads to cell death.</title>
        <authorList>
            <person name="Zaveri A."/>
            <person name="Wang R."/>
            <person name="Botella L."/>
            <person name="Sharma R."/>
            <person name="Zhu L."/>
            <person name="Wallach J.B."/>
            <person name="Song N."/>
            <person name="Jansen R.S."/>
            <person name="Rhee K.Y."/>
            <person name="Ehrt S."/>
            <person name="Schnappinger D."/>
        </authorList>
    </citation>
    <scope>SUBUNIT</scope>
    <source>
        <strain>H37Rv</strain>
    </source>
</reference>
<dbReference type="EMBL" id="AL123456">
    <property type="protein sequence ID" value="CCP45516.1"/>
    <property type="molecule type" value="Genomic_DNA"/>
</dbReference>
<dbReference type="PIR" id="A70533">
    <property type="entry name" value="A70533"/>
</dbReference>
<dbReference type="RefSeq" id="NP_217234.1">
    <property type="nucleotide sequence ID" value="NC_000962.3"/>
</dbReference>
<dbReference type="RefSeq" id="WP_003413973.1">
    <property type="nucleotide sequence ID" value="NZ_NVQJ01000017.1"/>
</dbReference>
<dbReference type="SMR" id="P9WIZ1"/>
<dbReference type="FunCoup" id="P9WIZ1">
    <property type="interactions" value="27"/>
</dbReference>
<dbReference type="STRING" id="83332.Rv2718c"/>
<dbReference type="PaxDb" id="83332-Rv2718c"/>
<dbReference type="GeneID" id="45426705"/>
<dbReference type="GeneID" id="887985"/>
<dbReference type="KEGG" id="mtu:Rv2718c"/>
<dbReference type="KEGG" id="mtv:RVBD_2718c"/>
<dbReference type="TubercuList" id="Rv2718c"/>
<dbReference type="eggNOG" id="COG1327">
    <property type="taxonomic scope" value="Bacteria"/>
</dbReference>
<dbReference type="InParanoid" id="P9WIZ1"/>
<dbReference type="OrthoDB" id="9807461at2"/>
<dbReference type="PhylomeDB" id="P9WIZ1"/>
<dbReference type="Proteomes" id="UP000001584">
    <property type="component" value="Chromosome"/>
</dbReference>
<dbReference type="GO" id="GO:0005829">
    <property type="term" value="C:cytosol"/>
    <property type="evidence" value="ECO:0007005"/>
    <property type="project" value="MTBBASE"/>
</dbReference>
<dbReference type="GO" id="GO:0005524">
    <property type="term" value="F:ATP binding"/>
    <property type="evidence" value="ECO:0007669"/>
    <property type="project" value="UniProtKB-KW"/>
</dbReference>
<dbReference type="GO" id="GO:0003690">
    <property type="term" value="F:double-stranded DNA binding"/>
    <property type="evidence" value="ECO:0000318"/>
    <property type="project" value="GO_Central"/>
</dbReference>
<dbReference type="GO" id="GO:0008270">
    <property type="term" value="F:zinc ion binding"/>
    <property type="evidence" value="ECO:0007669"/>
    <property type="project" value="UniProtKB-UniRule"/>
</dbReference>
<dbReference type="GO" id="GO:0045892">
    <property type="term" value="P:negative regulation of DNA-templated transcription"/>
    <property type="evidence" value="ECO:0000318"/>
    <property type="project" value="GO_Central"/>
</dbReference>
<dbReference type="HAMAP" id="MF_00440">
    <property type="entry name" value="NrdR"/>
    <property type="match status" value="1"/>
</dbReference>
<dbReference type="InterPro" id="IPR005144">
    <property type="entry name" value="ATP-cone_dom"/>
</dbReference>
<dbReference type="InterPro" id="IPR055173">
    <property type="entry name" value="NrdR-like_N"/>
</dbReference>
<dbReference type="InterPro" id="IPR003796">
    <property type="entry name" value="RNR_NrdR-like"/>
</dbReference>
<dbReference type="NCBIfam" id="TIGR00244">
    <property type="entry name" value="transcriptional regulator NrdR"/>
    <property type="match status" value="1"/>
</dbReference>
<dbReference type="PANTHER" id="PTHR30455">
    <property type="entry name" value="TRANSCRIPTIONAL REPRESSOR NRDR"/>
    <property type="match status" value="1"/>
</dbReference>
<dbReference type="PANTHER" id="PTHR30455:SF2">
    <property type="entry name" value="TRANSCRIPTIONAL REPRESSOR NRDR"/>
    <property type="match status" value="1"/>
</dbReference>
<dbReference type="Pfam" id="PF03477">
    <property type="entry name" value="ATP-cone"/>
    <property type="match status" value="1"/>
</dbReference>
<dbReference type="Pfam" id="PF22811">
    <property type="entry name" value="Zn_ribbon_NrdR"/>
    <property type="match status" value="1"/>
</dbReference>
<dbReference type="PROSITE" id="PS51161">
    <property type="entry name" value="ATP_CONE"/>
    <property type="match status" value="1"/>
</dbReference>
<accession>P9WIZ1</accession>
<accession>L0TAN9</accession>
<accession>O07217</accession>
<accession>P67313</accession>
<proteinExistence type="evidence at protein level"/>
<comment type="function">
    <text evidence="1">Negatively regulates transcription of bacterial ribonucleotide reductase nrd genes and operons by binding to NrdR-boxes.</text>
</comment>
<comment type="cofactor">
    <cofactor evidence="1">
        <name>Zn(2+)</name>
        <dbReference type="ChEBI" id="CHEBI:29105"/>
    </cofactor>
    <text evidence="1">Binds 1 zinc ion.</text>
</comment>
<comment type="subunit">
    <text evidence="2">Co-immunoprecipitates with DarG in the presence and absence of darT.</text>
</comment>
<comment type="similarity">
    <text evidence="1">Belongs to the NrdR family.</text>
</comment>
<gene>
    <name evidence="1" type="primary">nrdR</name>
    <name type="ordered locus">Rv2718c</name>
    <name type="ORF">MTCY05A6.39c</name>
</gene>
<name>NRDR_MYCTU</name>
<feature type="chain" id="PRO_0000182321" description="Transcriptional repressor NrdR">
    <location>
        <begin position="1"/>
        <end position="154"/>
    </location>
</feature>
<feature type="domain" description="ATP-cone" evidence="1">
    <location>
        <begin position="46"/>
        <end position="136"/>
    </location>
</feature>
<feature type="zinc finger region" evidence="1">
    <location>
        <begin position="3"/>
        <end position="34"/>
    </location>
</feature>
<evidence type="ECO:0000255" key="1">
    <source>
        <dbReference type="HAMAP-Rule" id="MF_00440"/>
    </source>
</evidence>
<evidence type="ECO:0000269" key="2">
    <source>
    </source>
</evidence>